<gene>
    <name evidence="1" type="primary">dctA</name>
    <name type="ordered locus">SCH_3548</name>
</gene>
<comment type="function">
    <text evidence="1">Responsible for the transport of dicarboxylates such as succinate, fumarate, and malate from the periplasm across the membrane.</text>
</comment>
<comment type="subcellular location">
    <subcellularLocation>
        <location evidence="1">Cell inner membrane</location>
        <topology evidence="1">Multi-pass membrane protein</topology>
    </subcellularLocation>
</comment>
<comment type="similarity">
    <text evidence="1">Belongs to the dicarboxylate/amino acid:cation symporter (DAACS) (TC 2.A.23) family.</text>
</comment>
<accession>Q57IK8</accession>
<name>DCTA_SALCH</name>
<evidence type="ECO:0000255" key="1">
    <source>
        <dbReference type="HAMAP-Rule" id="MF_01300"/>
    </source>
</evidence>
<proteinExistence type="inferred from homology"/>
<reference key="1">
    <citation type="journal article" date="2005" name="Nucleic Acids Res.">
        <title>The genome sequence of Salmonella enterica serovar Choleraesuis, a highly invasive and resistant zoonotic pathogen.</title>
        <authorList>
            <person name="Chiu C.-H."/>
            <person name="Tang P."/>
            <person name="Chu C."/>
            <person name="Hu S."/>
            <person name="Bao Q."/>
            <person name="Yu J."/>
            <person name="Chou Y.-Y."/>
            <person name="Wang H.-S."/>
            <person name="Lee Y.-S."/>
        </authorList>
    </citation>
    <scope>NUCLEOTIDE SEQUENCE [LARGE SCALE GENOMIC DNA]</scope>
    <source>
        <strain>SC-B67</strain>
    </source>
</reference>
<dbReference type="EMBL" id="AE017220">
    <property type="protein sequence ID" value="AAX67454.1"/>
    <property type="molecule type" value="Genomic_DNA"/>
</dbReference>
<dbReference type="RefSeq" id="WP_000858228.1">
    <property type="nucleotide sequence ID" value="NC_006905.1"/>
</dbReference>
<dbReference type="SMR" id="Q57IK8"/>
<dbReference type="KEGG" id="sec:SCH_3548"/>
<dbReference type="HOGENOM" id="CLU_019375_7_0_6"/>
<dbReference type="Proteomes" id="UP000000538">
    <property type="component" value="Chromosome"/>
</dbReference>
<dbReference type="GO" id="GO:0005886">
    <property type="term" value="C:plasma membrane"/>
    <property type="evidence" value="ECO:0007669"/>
    <property type="project" value="UniProtKB-SubCell"/>
</dbReference>
<dbReference type="GO" id="GO:0015138">
    <property type="term" value="F:fumarate transmembrane transporter activity"/>
    <property type="evidence" value="ECO:0007669"/>
    <property type="project" value="TreeGrafter"/>
</dbReference>
<dbReference type="GO" id="GO:0015366">
    <property type="term" value="F:malate:proton symporter activity"/>
    <property type="evidence" value="ECO:0007669"/>
    <property type="project" value="TreeGrafter"/>
</dbReference>
<dbReference type="GO" id="GO:0015141">
    <property type="term" value="F:succinate transmembrane transporter activity"/>
    <property type="evidence" value="ECO:0007669"/>
    <property type="project" value="TreeGrafter"/>
</dbReference>
<dbReference type="GO" id="GO:0070778">
    <property type="term" value="P:L-aspartate transmembrane transport"/>
    <property type="evidence" value="ECO:0007669"/>
    <property type="project" value="TreeGrafter"/>
</dbReference>
<dbReference type="FunFam" id="1.10.3860.10:FF:000001">
    <property type="entry name" value="C4-dicarboxylate transport protein"/>
    <property type="match status" value="1"/>
</dbReference>
<dbReference type="Gene3D" id="1.10.3860.10">
    <property type="entry name" value="Sodium:dicarboxylate symporter"/>
    <property type="match status" value="1"/>
</dbReference>
<dbReference type="HAMAP" id="MF_01300">
    <property type="entry name" value="C4_dicarb_transport"/>
    <property type="match status" value="1"/>
</dbReference>
<dbReference type="InterPro" id="IPR023954">
    <property type="entry name" value="C4_dicarb_transport"/>
</dbReference>
<dbReference type="InterPro" id="IPR001991">
    <property type="entry name" value="Na-dicarboxylate_symporter"/>
</dbReference>
<dbReference type="InterPro" id="IPR018107">
    <property type="entry name" value="Na-dicarboxylate_symporter_CS"/>
</dbReference>
<dbReference type="InterPro" id="IPR036458">
    <property type="entry name" value="Na:dicarbo_symporter_sf"/>
</dbReference>
<dbReference type="NCBIfam" id="NF002461">
    <property type="entry name" value="PRK01663.1"/>
    <property type="match status" value="1"/>
</dbReference>
<dbReference type="NCBIfam" id="NF009587">
    <property type="entry name" value="PRK13027.1"/>
    <property type="match status" value="1"/>
</dbReference>
<dbReference type="PANTHER" id="PTHR42865:SF1">
    <property type="entry name" value="AEROBIC C4-DICARBOXYLATE TRANSPORT PROTEIN"/>
    <property type="match status" value="1"/>
</dbReference>
<dbReference type="PANTHER" id="PTHR42865">
    <property type="entry name" value="PROTON/GLUTAMATE-ASPARTATE SYMPORTER"/>
    <property type="match status" value="1"/>
</dbReference>
<dbReference type="Pfam" id="PF00375">
    <property type="entry name" value="SDF"/>
    <property type="match status" value="1"/>
</dbReference>
<dbReference type="PRINTS" id="PR00173">
    <property type="entry name" value="EDTRNSPORT"/>
</dbReference>
<dbReference type="SUPFAM" id="SSF118215">
    <property type="entry name" value="Proton glutamate symport protein"/>
    <property type="match status" value="1"/>
</dbReference>
<dbReference type="PROSITE" id="PS00713">
    <property type="entry name" value="NA_DICARBOXYL_SYMP_1"/>
    <property type="match status" value="1"/>
</dbReference>
<dbReference type="PROSITE" id="PS00714">
    <property type="entry name" value="NA_DICARBOXYL_SYMP_2"/>
    <property type="match status" value="1"/>
</dbReference>
<sequence>MKTSLFKSLYFQVLTAIAIGILLGHYYPELGAQMKPLGDAFVKLIKMIIAPVIFCTVVTGIAGMESMKAVGRTGAVALLYFEIVSTIALIIGLIIVNVVQPGAGMNVDPATLDAQAVAVYAAQAKEQGIIAFLMDVIPGSVIGAFASGNILQVLLFAVLFGFALHRLGSKGQLIFNVIESFSQVIFGIINMIMRLAPIGAFGAMAFTIGKYGVGSLVQLGQLIICFYITCILFVVVVLGTIARVTGFSIFKFIRYIREELLIVLGTSSSESALPRMLDKMEKLGCRKSVVGLVIPTGYSFNLDGTSIYLTMAAVFIAQATNSHMDIFHQITLLVVLLLSSKGAAGVTGSGFIVLAATISAVGHLPVAGLALILGIDRFMSEARALTNLVGNGVATVVVAKWVKELDHQKLDDVLNNRAPDGKTHEISS</sequence>
<keyword id="KW-0997">Cell inner membrane</keyword>
<keyword id="KW-1003">Cell membrane</keyword>
<keyword id="KW-0472">Membrane</keyword>
<keyword id="KW-0769">Symport</keyword>
<keyword id="KW-0812">Transmembrane</keyword>
<keyword id="KW-1133">Transmembrane helix</keyword>
<keyword id="KW-0813">Transport</keyword>
<organism>
    <name type="scientific">Salmonella choleraesuis (strain SC-B67)</name>
    <dbReference type="NCBI Taxonomy" id="321314"/>
    <lineage>
        <taxon>Bacteria</taxon>
        <taxon>Pseudomonadati</taxon>
        <taxon>Pseudomonadota</taxon>
        <taxon>Gammaproteobacteria</taxon>
        <taxon>Enterobacterales</taxon>
        <taxon>Enterobacteriaceae</taxon>
        <taxon>Salmonella</taxon>
    </lineage>
</organism>
<protein>
    <recommendedName>
        <fullName evidence="1">C4-dicarboxylate transport protein</fullName>
    </recommendedName>
</protein>
<feature type="chain" id="PRO_1000067462" description="C4-dicarboxylate transport protein">
    <location>
        <begin position="1"/>
        <end position="428"/>
    </location>
</feature>
<feature type="transmembrane region" description="Helical" evidence="1">
    <location>
        <begin position="4"/>
        <end position="24"/>
    </location>
</feature>
<feature type="transmembrane region" description="Helical" evidence="1">
    <location>
        <begin position="44"/>
        <end position="64"/>
    </location>
</feature>
<feature type="transmembrane region" description="Helical" evidence="1">
    <location>
        <begin position="76"/>
        <end position="96"/>
    </location>
</feature>
<feature type="transmembrane region" description="Helical" evidence="1">
    <location>
        <begin position="142"/>
        <end position="162"/>
    </location>
</feature>
<feature type="transmembrane region" description="Helical" evidence="1">
    <location>
        <begin position="184"/>
        <end position="204"/>
    </location>
</feature>
<feature type="transmembrane region" description="Helical" evidence="1">
    <location>
        <begin position="222"/>
        <end position="242"/>
    </location>
</feature>
<feature type="transmembrane region" description="Helical" evidence="1">
    <location>
        <begin position="289"/>
        <end position="309"/>
    </location>
</feature>
<feature type="transmembrane region" description="Helical" evidence="1">
    <location>
        <begin position="326"/>
        <end position="346"/>
    </location>
</feature>
<feature type="transmembrane region" description="Helical" evidence="1">
    <location>
        <begin position="352"/>
        <end position="372"/>
    </location>
</feature>